<name>HBS1_SCHPO</name>
<accession>O74774</accession>
<dbReference type="EC" id="3.6.5.-" evidence="1"/>
<dbReference type="EMBL" id="CU329671">
    <property type="protein sequence ID" value="CAA21259.2"/>
    <property type="molecule type" value="Genomic_DNA"/>
</dbReference>
<dbReference type="RefSeq" id="XP_001713137.1">
    <property type="nucleotide sequence ID" value="XM_001713085.2"/>
</dbReference>
<dbReference type="PDB" id="3MCA">
    <property type="method" value="X-ray"/>
    <property type="resolution" value="2.74 A"/>
    <property type="chains" value="A=1-592"/>
</dbReference>
<dbReference type="PDBsum" id="3MCA"/>
<dbReference type="SMR" id="O74774"/>
<dbReference type="BioGRID" id="276958">
    <property type="interactions" value="22"/>
</dbReference>
<dbReference type="DIP" id="DIP-59037N"/>
<dbReference type="FunCoup" id="O74774">
    <property type="interactions" value="68"/>
</dbReference>
<dbReference type="IntAct" id="O74774">
    <property type="interactions" value="1"/>
</dbReference>
<dbReference type="STRING" id="284812.O74774"/>
<dbReference type="iPTMnet" id="O74774"/>
<dbReference type="PaxDb" id="4896-SPBC25B2.01.1"/>
<dbReference type="EnsemblFungi" id="SPBC25B2.01.1">
    <property type="protein sequence ID" value="SPBC25B2.01.1:pep"/>
    <property type="gene ID" value="SPBC25B2.01"/>
</dbReference>
<dbReference type="PomBase" id="SPBC25B2.01">
    <property type="gene designation" value="hbs1"/>
</dbReference>
<dbReference type="VEuPathDB" id="FungiDB:SPBC25B2.01"/>
<dbReference type="eggNOG" id="KOG0458">
    <property type="taxonomic scope" value="Eukaryota"/>
</dbReference>
<dbReference type="HOGENOM" id="CLU_007265_3_2_1"/>
<dbReference type="InParanoid" id="O74774"/>
<dbReference type="OMA" id="VVQITCH"/>
<dbReference type="PhylomeDB" id="O74774"/>
<dbReference type="Reactome" id="R-SPO-156842">
    <property type="pathway name" value="Eukaryotic Translation Elongation"/>
</dbReference>
<dbReference type="Reactome" id="R-SPO-3371511">
    <property type="pathway name" value="HSF1 activation"/>
</dbReference>
<dbReference type="Reactome" id="R-SPO-6798695">
    <property type="pathway name" value="Neutrophil degranulation"/>
</dbReference>
<dbReference type="Reactome" id="R-SPO-8876725">
    <property type="pathway name" value="Protein methylation"/>
</dbReference>
<dbReference type="EvolutionaryTrace" id="O74774"/>
<dbReference type="PRO" id="PR:O74774"/>
<dbReference type="Proteomes" id="UP000002485">
    <property type="component" value="Chromosome II"/>
</dbReference>
<dbReference type="GO" id="GO:0005829">
    <property type="term" value="C:cytosol"/>
    <property type="evidence" value="ECO:0007005"/>
    <property type="project" value="PomBase"/>
</dbReference>
<dbReference type="GO" id="GO:1990533">
    <property type="term" value="C:Dom34-Hbs1 complex"/>
    <property type="evidence" value="ECO:0000314"/>
    <property type="project" value="PomBase"/>
</dbReference>
<dbReference type="GO" id="GO:0005525">
    <property type="term" value="F:GTP binding"/>
    <property type="evidence" value="ECO:0000314"/>
    <property type="project" value="PomBase"/>
</dbReference>
<dbReference type="GO" id="GO:0003924">
    <property type="term" value="F:GTPase activity"/>
    <property type="evidence" value="ECO:0000318"/>
    <property type="project" value="GO_Central"/>
</dbReference>
<dbReference type="GO" id="GO:0003746">
    <property type="term" value="F:translation elongation factor activity"/>
    <property type="evidence" value="ECO:0007669"/>
    <property type="project" value="UniProtKB-KW"/>
</dbReference>
<dbReference type="GO" id="GO:0003747">
    <property type="term" value="F:translation release factor activity"/>
    <property type="evidence" value="ECO:0000305"/>
    <property type="project" value="PomBase"/>
</dbReference>
<dbReference type="GO" id="GO:0002184">
    <property type="term" value="P:cytoplasmic translational termination"/>
    <property type="evidence" value="ECO:0000305"/>
    <property type="project" value="PomBase"/>
</dbReference>
<dbReference type="GO" id="GO:0030968">
    <property type="term" value="P:endoplasmic reticulum unfolded protein response"/>
    <property type="evidence" value="ECO:0000315"/>
    <property type="project" value="PomBase"/>
</dbReference>
<dbReference type="GO" id="GO:0070966">
    <property type="term" value="P:nuclear-transcribed mRNA catabolic process, no-go decay"/>
    <property type="evidence" value="ECO:0000266"/>
    <property type="project" value="PomBase"/>
</dbReference>
<dbReference type="GO" id="GO:0006417">
    <property type="term" value="P:regulation of translation"/>
    <property type="evidence" value="ECO:0007669"/>
    <property type="project" value="UniProtKB-KW"/>
</dbReference>
<dbReference type="GO" id="GO:0006412">
    <property type="term" value="P:translation"/>
    <property type="evidence" value="ECO:0000318"/>
    <property type="project" value="GO_Central"/>
</dbReference>
<dbReference type="CDD" id="cd01883">
    <property type="entry name" value="EF1_alpha"/>
    <property type="match status" value="1"/>
</dbReference>
<dbReference type="CDD" id="cd03698">
    <property type="entry name" value="eRF3_II_like"/>
    <property type="match status" value="1"/>
</dbReference>
<dbReference type="DisProt" id="DP02049"/>
<dbReference type="FunFam" id="2.40.30.10:FF:000020">
    <property type="entry name" value="Translation elongation factor EF-1"/>
    <property type="match status" value="1"/>
</dbReference>
<dbReference type="FunFam" id="3.40.50.300:FF:000204">
    <property type="entry name" value="Translation elongation factor Tu"/>
    <property type="match status" value="1"/>
</dbReference>
<dbReference type="Gene3D" id="3.40.50.300">
    <property type="entry name" value="P-loop containing nucleotide triphosphate hydrolases"/>
    <property type="match status" value="1"/>
</dbReference>
<dbReference type="Gene3D" id="2.40.30.10">
    <property type="entry name" value="Translation factors"/>
    <property type="match status" value="2"/>
</dbReference>
<dbReference type="InterPro" id="IPR054696">
    <property type="entry name" value="GTP-eEF1A_C"/>
</dbReference>
<dbReference type="InterPro" id="IPR015033">
    <property type="entry name" value="HBS1-like_N"/>
</dbReference>
<dbReference type="InterPro" id="IPR027417">
    <property type="entry name" value="P-loop_NTPase"/>
</dbReference>
<dbReference type="InterPro" id="IPR000795">
    <property type="entry name" value="T_Tr_GTP-bd_dom"/>
</dbReference>
<dbReference type="InterPro" id="IPR050100">
    <property type="entry name" value="TRAFAC_GTPase_members"/>
</dbReference>
<dbReference type="InterPro" id="IPR009000">
    <property type="entry name" value="Transl_B-barrel_sf"/>
</dbReference>
<dbReference type="InterPro" id="IPR009001">
    <property type="entry name" value="Transl_elong_EF1A/Init_IF2_C"/>
</dbReference>
<dbReference type="PANTHER" id="PTHR23115">
    <property type="entry name" value="TRANSLATION FACTOR"/>
    <property type="match status" value="1"/>
</dbReference>
<dbReference type="Pfam" id="PF22594">
    <property type="entry name" value="GTP-eEF1A_C"/>
    <property type="match status" value="1"/>
</dbReference>
<dbReference type="Pfam" id="PF00009">
    <property type="entry name" value="GTP_EFTU"/>
    <property type="match status" value="1"/>
</dbReference>
<dbReference type="Pfam" id="PF08938">
    <property type="entry name" value="HBS1_N"/>
    <property type="match status" value="1"/>
</dbReference>
<dbReference type="PRINTS" id="PR00315">
    <property type="entry name" value="ELONGATNFCT"/>
</dbReference>
<dbReference type="SUPFAM" id="SSF50465">
    <property type="entry name" value="EF-Tu/eEF-1alpha/eIF2-gamma C-terminal domain"/>
    <property type="match status" value="1"/>
</dbReference>
<dbReference type="SUPFAM" id="SSF52540">
    <property type="entry name" value="P-loop containing nucleoside triphosphate hydrolases"/>
    <property type="match status" value="1"/>
</dbReference>
<dbReference type="SUPFAM" id="SSF50447">
    <property type="entry name" value="Translation proteins"/>
    <property type="match status" value="1"/>
</dbReference>
<dbReference type="PROSITE" id="PS51722">
    <property type="entry name" value="G_TR_2"/>
    <property type="match status" value="1"/>
</dbReference>
<proteinExistence type="evidence at protein level"/>
<feature type="chain" id="PRO_0000326088" description="Elongation factor 1 alpha-like protein">
    <location>
        <begin position="1"/>
        <end position="592"/>
    </location>
</feature>
<feature type="domain" description="tr-type G" evidence="2">
    <location>
        <begin position="175"/>
        <end position="401"/>
    </location>
</feature>
<feature type="region of interest" description="Disordered" evidence="3">
    <location>
        <begin position="1"/>
        <end position="35"/>
    </location>
</feature>
<feature type="region of interest" description="Disordered" evidence="3">
    <location>
        <begin position="78"/>
        <end position="159"/>
    </location>
</feature>
<feature type="region of interest" description="G1" evidence="2">
    <location>
        <begin position="184"/>
        <end position="191"/>
    </location>
</feature>
<feature type="region of interest" description="G2" evidence="2">
    <location>
        <begin position="240"/>
        <end position="244"/>
    </location>
</feature>
<feature type="region of interest" description="G3" evidence="2">
    <location>
        <begin position="261"/>
        <end position="264"/>
    </location>
</feature>
<feature type="region of interest" description="G4" evidence="2">
    <location>
        <begin position="323"/>
        <end position="326"/>
    </location>
</feature>
<feature type="region of interest" description="G5" evidence="2">
    <location>
        <begin position="363"/>
        <end position="365"/>
    </location>
</feature>
<feature type="compositionally biased region" description="Acidic residues" evidence="3">
    <location>
        <begin position="12"/>
        <end position="32"/>
    </location>
</feature>
<feature type="compositionally biased region" description="Basic and acidic residues" evidence="3">
    <location>
        <begin position="82"/>
        <end position="111"/>
    </location>
</feature>
<feature type="compositionally biased region" description="Polar residues" evidence="3">
    <location>
        <begin position="113"/>
        <end position="124"/>
    </location>
</feature>
<feature type="compositionally biased region" description="Basic and acidic residues" evidence="3">
    <location>
        <begin position="137"/>
        <end position="151"/>
    </location>
</feature>
<feature type="binding site" evidence="1">
    <location>
        <begin position="184"/>
        <end position="191"/>
    </location>
    <ligand>
        <name>GTP</name>
        <dbReference type="ChEBI" id="CHEBI:37565"/>
    </ligand>
</feature>
<feature type="binding site" evidence="1">
    <location>
        <begin position="323"/>
        <end position="326"/>
    </location>
    <ligand>
        <name>GTP</name>
        <dbReference type="ChEBI" id="CHEBI:37565"/>
    </ligand>
</feature>
<feature type="binding site" evidence="1">
    <location>
        <begin position="352"/>
        <end position="355"/>
    </location>
    <ligand>
        <name>GTP</name>
        <dbReference type="ChEBI" id="CHEBI:37565"/>
    </ligand>
</feature>
<feature type="helix" evidence="9">
    <location>
        <begin position="168"/>
        <end position="171"/>
    </location>
</feature>
<feature type="strand" evidence="9">
    <location>
        <begin position="177"/>
        <end position="183"/>
    </location>
</feature>
<feature type="strand" evidence="9">
    <location>
        <begin position="186"/>
        <end position="188"/>
    </location>
</feature>
<feature type="helix" evidence="9">
    <location>
        <begin position="190"/>
        <end position="202"/>
    </location>
</feature>
<feature type="strand" evidence="9">
    <location>
        <begin position="261"/>
        <end position="271"/>
    </location>
</feature>
<feature type="strand" evidence="9">
    <location>
        <begin position="284"/>
        <end position="290"/>
    </location>
</feature>
<feature type="helix" evidence="9">
    <location>
        <begin position="303"/>
        <end position="312"/>
    </location>
</feature>
<feature type="strand" evidence="9">
    <location>
        <begin position="318"/>
        <end position="323"/>
    </location>
</feature>
<feature type="helix" evidence="9">
    <location>
        <begin position="325"/>
        <end position="328"/>
    </location>
</feature>
<feature type="helix" evidence="9">
    <location>
        <begin position="332"/>
        <end position="346"/>
    </location>
</feature>
<feature type="turn" evidence="9">
    <location>
        <begin position="347"/>
        <end position="349"/>
    </location>
</feature>
<feature type="helix" evidence="9">
    <location>
        <begin position="354"/>
        <end position="356"/>
    </location>
</feature>
<feature type="strand" evidence="9">
    <location>
        <begin position="357"/>
        <end position="362"/>
    </location>
</feature>
<feature type="strand" evidence="9">
    <location>
        <begin position="364"/>
        <end position="366"/>
    </location>
</feature>
<feature type="strand" evidence="9">
    <location>
        <begin position="368"/>
        <end position="370"/>
    </location>
</feature>
<feature type="helix" evidence="9">
    <location>
        <begin position="377"/>
        <end position="380"/>
    </location>
</feature>
<feature type="helix" evidence="9">
    <location>
        <begin position="387"/>
        <end position="392"/>
    </location>
</feature>
<feature type="turn" evidence="9">
    <location>
        <begin position="400"/>
        <end position="402"/>
    </location>
</feature>
<feature type="strand" evidence="9">
    <location>
        <begin position="406"/>
        <end position="415"/>
    </location>
</feature>
<feature type="strand" evidence="9">
    <location>
        <begin position="418"/>
        <end position="431"/>
    </location>
</feature>
<feature type="strand" evidence="9">
    <location>
        <begin position="435"/>
        <end position="438"/>
    </location>
</feature>
<feature type="turn" evidence="9">
    <location>
        <begin position="439"/>
        <end position="442"/>
    </location>
</feature>
<feature type="strand" evidence="9">
    <location>
        <begin position="443"/>
        <end position="451"/>
    </location>
</feature>
<feature type="strand" evidence="9">
    <location>
        <begin position="453"/>
        <end position="455"/>
    </location>
</feature>
<feature type="strand" evidence="9">
    <location>
        <begin position="460"/>
        <end position="462"/>
    </location>
</feature>
<feature type="strand" evidence="9">
    <location>
        <begin position="466"/>
        <end position="474"/>
    </location>
</feature>
<feature type="helix" evidence="9">
    <location>
        <begin position="476"/>
        <end position="478"/>
    </location>
</feature>
<feature type="strand" evidence="9">
    <location>
        <begin position="484"/>
        <end position="486"/>
    </location>
</feature>
<feature type="strand" evidence="9">
    <location>
        <begin position="488"/>
        <end position="490"/>
    </location>
</feature>
<feature type="strand" evidence="9">
    <location>
        <begin position="493"/>
        <end position="504"/>
    </location>
</feature>
<feature type="strand" evidence="9">
    <location>
        <begin position="515"/>
        <end position="520"/>
    </location>
</feature>
<feature type="strand" evidence="9">
    <location>
        <begin position="525"/>
        <end position="538"/>
    </location>
</feature>
<feature type="strand" evidence="9">
    <location>
        <begin position="541"/>
        <end position="543"/>
    </location>
</feature>
<feature type="strand" evidence="9">
    <location>
        <begin position="548"/>
        <end position="558"/>
    </location>
</feature>
<feature type="strand" evidence="9">
    <location>
        <begin position="560"/>
        <end position="562"/>
    </location>
</feature>
<feature type="turn" evidence="9">
    <location>
        <begin position="565"/>
        <end position="567"/>
    </location>
</feature>
<feature type="helix" evidence="9">
    <location>
        <begin position="569"/>
        <end position="572"/>
    </location>
</feature>
<feature type="strand" evidence="9">
    <location>
        <begin position="573"/>
        <end position="592"/>
    </location>
</feature>
<comment type="function">
    <text evidence="1 5">GTPase component of the Dom34-Hbs1 complex, a complex that recognizes stalled ribosomes and triggers the No-Go Decay (NGD) pathway (PubMed:20890290). The Dom34-Hbs1 complex recognizes ribosomes stalled at the 3' end of an mRNA and engages stalled ribosomes by destabilizing mRNA in the mRNA channel (By similarity). Following ribosome-binding, the Pelota-HBS1L complex promotes the disassembly of stalled ribosomes, followed by degradation of damaged mRNAs as part of the NGD pathway (By similarity).</text>
</comment>
<comment type="catalytic activity">
    <reaction evidence="1">
        <text>GTP + H2O = GDP + phosphate + H(+)</text>
        <dbReference type="Rhea" id="RHEA:19669"/>
        <dbReference type="ChEBI" id="CHEBI:15377"/>
        <dbReference type="ChEBI" id="CHEBI:15378"/>
        <dbReference type="ChEBI" id="CHEBI:37565"/>
        <dbReference type="ChEBI" id="CHEBI:43474"/>
        <dbReference type="ChEBI" id="CHEBI:58189"/>
    </reaction>
    <physiologicalReaction direction="left-to-right" evidence="1">
        <dbReference type="Rhea" id="RHEA:19670"/>
    </physiologicalReaction>
</comment>
<comment type="subunit">
    <text evidence="5">Component of the Dom34-Hbs1 complex, also named Pelota-HBS1L complex, composed of dom34 and hbs1.</text>
</comment>
<comment type="interaction">
    <interactant intactId="EBI-15882111">
        <id>O74774</id>
    </interactant>
    <interactant intactId="EBI-15882140">
        <id>Q9USL5</id>
        <label>dom34</label>
    </interactant>
    <organismsDiffer>false</organismsDiffer>
    <experiments>5</experiments>
</comment>
<comment type="subcellular location">
    <subcellularLocation>
        <location evidence="4">Cytoplasm</location>
    </subcellularLocation>
</comment>
<comment type="similarity">
    <text evidence="2">Belongs to the TRAFAC class translation factor GTPase superfamily. Classic translation factor GTPase family.</text>
</comment>
<sequence length="592" mass="66016">MSRHRDVKNLDLDDYELDEEPGEEELTEEQEEEFRSAVATVRETLLGVPISEKEIADTVWYYYFDVEKSVNYLLQKASSKAGAKEKQNTDSQKEKKQNKSKEALADAKDPLDESSNGIKNLSLNKNDEPAFQTNGEVKMKNSSESDNQPEKKKIKKQNPTDLVSVPEIFEQSNPKPVVHLVVTGHVDSGKSTMLGRIMFELGEINSRSMQKLHNEAANSGKGSFSYAWLLDTTEEERARGVTMDVASTTFESDKKIYEIGDAPGHRDFISGMIAGASSADFAVLVVDSSQNNFERGFLENGQTREHAYLLRALGISEIVVSVNKLDLMSWSEDRFQEIKNIVSDFLIKMVGFKTSNVHFVPISAISGTNLIQKDSSDLYKWYKGPTLLSALDQLVPPEKPYRKPLRLSIDDVYRSPRSVTVTGRVEAGNVQVNQVLYDVSSQEDAYVKNVIRNSDPSSTWAVAGDTVTLQLADIEVNQLRPGDILSNYENPVRRVRSFVAEIQTFDIHGPILSGSTLVLHLGRTVTSVSLKIVTVNNKRSRHIASRKRALVRISFLDGLFPLCLAEECPALGRFILRRSGDTVAAGIVKELC</sequence>
<reference evidence="7" key="1">
    <citation type="journal article" date="2002" name="Nature">
        <title>The genome sequence of Schizosaccharomyces pombe.</title>
        <authorList>
            <person name="Wood V."/>
            <person name="Gwilliam R."/>
            <person name="Rajandream M.A."/>
            <person name="Lyne M.H."/>
            <person name="Lyne R."/>
            <person name="Stewart A."/>
            <person name="Sgouros J.G."/>
            <person name="Peat N."/>
            <person name="Hayles J."/>
            <person name="Baker S.G."/>
            <person name="Basham D."/>
            <person name="Bowman S."/>
            <person name="Brooks K."/>
            <person name="Brown D."/>
            <person name="Brown S."/>
            <person name="Chillingworth T."/>
            <person name="Churcher C.M."/>
            <person name="Collins M."/>
            <person name="Connor R."/>
            <person name="Cronin A."/>
            <person name="Davis P."/>
            <person name="Feltwell T."/>
            <person name="Fraser A."/>
            <person name="Gentles S."/>
            <person name="Goble A."/>
            <person name="Hamlin N."/>
            <person name="Harris D.E."/>
            <person name="Hidalgo J."/>
            <person name="Hodgson G."/>
            <person name="Holroyd S."/>
            <person name="Hornsby T."/>
            <person name="Howarth S."/>
            <person name="Huckle E.J."/>
            <person name="Hunt S."/>
            <person name="Jagels K."/>
            <person name="James K.D."/>
            <person name="Jones L."/>
            <person name="Jones M."/>
            <person name="Leather S."/>
            <person name="McDonald S."/>
            <person name="McLean J."/>
            <person name="Mooney P."/>
            <person name="Moule S."/>
            <person name="Mungall K.L."/>
            <person name="Murphy L.D."/>
            <person name="Niblett D."/>
            <person name="Odell C."/>
            <person name="Oliver K."/>
            <person name="O'Neil S."/>
            <person name="Pearson D."/>
            <person name="Quail M.A."/>
            <person name="Rabbinowitsch E."/>
            <person name="Rutherford K.M."/>
            <person name="Rutter S."/>
            <person name="Saunders D."/>
            <person name="Seeger K."/>
            <person name="Sharp S."/>
            <person name="Skelton J."/>
            <person name="Simmonds M.N."/>
            <person name="Squares R."/>
            <person name="Squares S."/>
            <person name="Stevens K."/>
            <person name="Taylor K."/>
            <person name="Taylor R.G."/>
            <person name="Tivey A."/>
            <person name="Walsh S.V."/>
            <person name="Warren T."/>
            <person name="Whitehead S."/>
            <person name="Woodward J.R."/>
            <person name="Volckaert G."/>
            <person name="Aert R."/>
            <person name="Robben J."/>
            <person name="Grymonprez B."/>
            <person name="Weltjens I."/>
            <person name="Vanstreels E."/>
            <person name="Rieger M."/>
            <person name="Schaefer M."/>
            <person name="Mueller-Auer S."/>
            <person name="Gabel C."/>
            <person name="Fuchs M."/>
            <person name="Duesterhoeft A."/>
            <person name="Fritzc C."/>
            <person name="Holzer E."/>
            <person name="Moestl D."/>
            <person name="Hilbert H."/>
            <person name="Borzym K."/>
            <person name="Langer I."/>
            <person name="Beck A."/>
            <person name="Lehrach H."/>
            <person name="Reinhardt R."/>
            <person name="Pohl T.M."/>
            <person name="Eger P."/>
            <person name="Zimmermann W."/>
            <person name="Wedler H."/>
            <person name="Wambutt R."/>
            <person name="Purnelle B."/>
            <person name="Goffeau A."/>
            <person name="Cadieu E."/>
            <person name="Dreano S."/>
            <person name="Gloux S."/>
            <person name="Lelaure V."/>
            <person name="Mottier S."/>
            <person name="Galibert F."/>
            <person name="Aves S.J."/>
            <person name="Xiang Z."/>
            <person name="Hunt C."/>
            <person name="Moore K."/>
            <person name="Hurst S.M."/>
            <person name="Lucas M."/>
            <person name="Rochet M."/>
            <person name="Gaillardin C."/>
            <person name="Tallada V.A."/>
            <person name="Garzon A."/>
            <person name="Thode G."/>
            <person name="Daga R.R."/>
            <person name="Cruzado L."/>
            <person name="Jimenez J."/>
            <person name="Sanchez M."/>
            <person name="del Rey F."/>
            <person name="Benito J."/>
            <person name="Dominguez A."/>
            <person name="Revuelta J.L."/>
            <person name="Moreno S."/>
            <person name="Armstrong J."/>
            <person name="Forsburg S.L."/>
            <person name="Cerutti L."/>
            <person name="Lowe T."/>
            <person name="McCombie W.R."/>
            <person name="Paulsen I."/>
            <person name="Potashkin J."/>
            <person name="Shpakovski G.V."/>
            <person name="Ussery D."/>
            <person name="Barrell B.G."/>
            <person name="Nurse P."/>
        </authorList>
    </citation>
    <scope>NUCLEOTIDE SEQUENCE [LARGE SCALE GENOMIC DNA]</scope>
    <source>
        <strain>972 / ATCC 24843</strain>
    </source>
</reference>
<reference evidence="6" key="2">
    <citation type="journal article" date="2006" name="Nat. Biotechnol.">
        <title>ORFeome cloning and global analysis of protein localization in the fission yeast Schizosaccharomyces pombe.</title>
        <authorList>
            <person name="Matsuyama A."/>
            <person name="Arai R."/>
            <person name="Yashiroda Y."/>
            <person name="Shirai A."/>
            <person name="Kamata A."/>
            <person name="Sekido S."/>
            <person name="Kobayashi Y."/>
            <person name="Hashimoto A."/>
            <person name="Hamamoto M."/>
            <person name="Hiraoka Y."/>
            <person name="Horinouchi S."/>
            <person name="Yoshida M."/>
        </authorList>
    </citation>
    <scope>SUBCELLULAR LOCATION [LARGE SCALE ANALYSIS]</scope>
</reference>
<reference evidence="8" key="3">
    <citation type="journal article" date="2010" name="Nat. Struct. Mol. Biol.">
        <title>Structure of the Dom34-Hbs1 complex and implications for no-go decay.</title>
        <authorList>
            <person name="Chen L."/>
            <person name="Muhlrad D."/>
            <person name="Hauryliuk V."/>
            <person name="Cheng Z."/>
            <person name="Lim M.K."/>
            <person name="Shyp V."/>
            <person name="Parker R."/>
            <person name="Song H."/>
        </authorList>
    </citation>
    <scope>X-RAY CRYSTALLOGRAPHY (2.74 ANGSTROMS) IN COMPLEX WITH DOM34</scope>
    <scope>FUNCTION</scope>
    <scope>IDENTIFICATION IN THE DOM34-HBS1 COMPLEX</scope>
</reference>
<protein>
    <recommendedName>
        <fullName evidence="6">Elongation factor 1 alpha-like protein</fullName>
        <ecNumber evidence="1">3.6.5.-</ecNumber>
    </recommendedName>
</protein>
<organism>
    <name type="scientific">Schizosaccharomyces pombe (strain 972 / ATCC 24843)</name>
    <name type="common">Fission yeast</name>
    <dbReference type="NCBI Taxonomy" id="284812"/>
    <lineage>
        <taxon>Eukaryota</taxon>
        <taxon>Fungi</taxon>
        <taxon>Dikarya</taxon>
        <taxon>Ascomycota</taxon>
        <taxon>Taphrinomycotina</taxon>
        <taxon>Schizosaccharomycetes</taxon>
        <taxon>Schizosaccharomycetales</taxon>
        <taxon>Schizosaccharomycetaceae</taxon>
        <taxon>Schizosaccharomyces</taxon>
    </lineage>
</organism>
<keyword id="KW-0002">3D-structure</keyword>
<keyword id="KW-0963">Cytoplasm</keyword>
<keyword id="KW-0251">Elongation factor</keyword>
<keyword id="KW-0342">GTP-binding</keyword>
<keyword id="KW-0378">Hydrolase</keyword>
<keyword id="KW-0547">Nucleotide-binding</keyword>
<keyword id="KW-0648">Protein biosynthesis</keyword>
<keyword id="KW-1185">Reference proteome</keyword>
<keyword id="KW-0810">Translation regulation</keyword>
<evidence type="ECO:0000250" key="1">
    <source>
        <dbReference type="UniProtKB" id="P32769"/>
    </source>
</evidence>
<evidence type="ECO:0000255" key="2">
    <source>
        <dbReference type="PROSITE-ProRule" id="PRU01059"/>
    </source>
</evidence>
<evidence type="ECO:0000256" key="3">
    <source>
        <dbReference type="SAM" id="MobiDB-lite"/>
    </source>
</evidence>
<evidence type="ECO:0000269" key="4">
    <source>
    </source>
</evidence>
<evidence type="ECO:0000269" key="5">
    <source>
    </source>
</evidence>
<evidence type="ECO:0000305" key="6"/>
<evidence type="ECO:0000312" key="7">
    <source>
        <dbReference type="EMBL" id="CAA21259.2"/>
    </source>
</evidence>
<evidence type="ECO:0007744" key="8">
    <source>
        <dbReference type="PDB" id="3MCA"/>
    </source>
</evidence>
<evidence type="ECO:0007829" key="9">
    <source>
        <dbReference type="PDB" id="3MCA"/>
    </source>
</evidence>
<gene>
    <name evidence="1" type="primary">hbs1</name>
    <name type="ORF">SPBC25B2.01</name>
    <name type="ORF">SPBC2G5.08</name>
</gene>